<proteinExistence type="evidence at protein level"/>
<sequence>MVSEITHKSYPLHFVLFPFMAQGHMIPMVDIARLLAQRGVKITIVTTPHNAARFENVLSRAIESGLPISIVQVKLPSQEAGLPEGNETFDSLVSTKLLVPFFKAVNMLEEPVQKLFEEMSPQPSCIISDFCLPYTSKIAKKFNIPKILFHGMCCFCLLCMHVLRKNREILENLKSDKEHFVVPYFPDRVEFTRPQVPLATYVPGEWHEIKEDMVEADKTSYGVIVNTYQELEPAYANGYKEARSGKAWTIGPVSLCNKVGADKAERGNKADIDQDECLKWLDSKEEGSVLYVCLGSICSLPLSQLKELGLGLEESQRPFIWVVRGWEKNKELLEWFSESGFEERVKDRGLLIKGWSPQMLILAHHSVGGFLTHCGWNSTLEGITSGVPLLTWPLFGDQFCNQKLVVQVLKVGVSAGVEEVTNWGEEEKIGVLVDKEGVKKAVEELMGESDDAKEIRKRVKELGQLAHKAVEEGGSSHSNITSLLEDIMQLAQPNN</sequence>
<comment type="function">
    <text evidence="3">Catalyzes the transfer of a glucose (Glc) moiety from UDP-Glc to the C-3 position of the oleanane sapogenins oleanolate and hederagenin, and to the C-28 carboxylic group of the lupane sapogenin betulinate (PubMed:23027665). The monoglucosylated hederagenin 3-O-beta-D-glucoside is a feeding deterrent of the yellow-striped flea beetle (Phyllotreta nemorum) (PubMed:23027665).</text>
</comment>
<comment type="catalytic activity">
    <reaction evidence="3">
        <text>oleanolate + UDP-alpha-D-glucose = oleanolate 3-O-beta-D-glucoside + UDP + H(+)</text>
        <dbReference type="Rhea" id="RHEA:58024"/>
        <dbReference type="ChEBI" id="CHEBI:15378"/>
        <dbReference type="ChEBI" id="CHEBI:58223"/>
        <dbReference type="ChEBI" id="CHEBI:58885"/>
        <dbReference type="ChEBI" id="CHEBI:82828"/>
        <dbReference type="ChEBI" id="CHEBI:142488"/>
        <dbReference type="EC" id="2.4.1.368"/>
    </reaction>
    <physiologicalReaction direction="left-to-right" evidence="3">
        <dbReference type="Rhea" id="RHEA:58025"/>
    </physiologicalReaction>
</comment>
<comment type="similarity">
    <text evidence="5">Belongs to the UDP-glycosyltransferase family.</text>
</comment>
<protein>
    <recommendedName>
        <fullName evidence="4">UDP-glycosyltransferase 73C10</fullName>
        <ecNumber evidence="3">2.4.1.368</ecNumber>
    </recommendedName>
    <alternativeName>
        <fullName evidence="5">Oleanolate 3-O-glucosyltransferase UGT73C10</fullName>
    </alternativeName>
</protein>
<organism>
    <name type="scientific">Barbarea vulgaris</name>
    <name type="common">Yellow rocket</name>
    <name type="synonym">Erysimum barbarea</name>
    <dbReference type="NCBI Taxonomy" id="50459"/>
    <lineage>
        <taxon>Eukaryota</taxon>
        <taxon>Viridiplantae</taxon>
        <taxon>Streptophyta</taxon>
        <taxon>Embryophyta</taxon>
        <taxon>Tracheophyta</taxon>
        <taxon>Spermatophyta</taxon>
        <taxon>Magnoliopsida</taxon>
        <taxon>eudicotyledons</taxon>
        <taxon>Gunneridae</taxon>
        <taxon>Pentapetalae</taxon>
        <taxon>rosids</taxon>
        <taxon>malvids</taxon>
        <taxon>Brassicales</taxon>
        <taxon>Brassicaceae</taxon>
        <taxon>Cardamineae</taxon>
        <taxon>Barbarea</taxon>
    </lineage>
</organism>
<feature type="chain" id="PRO_0000452128" description="UDP-glycosyltransferase 73C10">
    <location>
        <begin position="1"/>
        <end position="495"/>
    </location>
</feature>
<feature type="active site" description="Proton acceptor" evidence="1">
    <location>
        <position position="24"/>
    </location>
</feature>
<feature type="active site" description="Charge relay" evidence="1">
    <location>
        <position position="129"/>
    </location>
</feature>
<feature type="binding site" evidence="2">
    <location>
        <position position="24"/>
    </location>
    <ligand>
        <name>an anthocyanidin</name>
        <dbReference type="ChEBI" id="CHEBI:143576"/>
    </ligand>
</feature>
<feature type="binding site" evidence="1">
    <location>
        <position position="358"/>
    </location>
    <ligand>
        <name>UDP-alpha-D-glucose</name>
        <dbReference type="ChEBI" id="CHEBI:58885"/>
    </ligand>
</feature>
<feature type="binding site" evidence="1">
    <location>
        <position position="373"/>
    </location>
    <ligand>
        <name>UDP-alpha-D-glucose</name>
        <dbReference type="ChEBI" id="CHEBI:58885"/>
    </ligand>
</feature>
<feature type="binding site" evidence="1">
    <location>
        <position position="376"/>
    </location>
    <ligand>
        <name>UDP-alpha-D-glucose</name>
        <dbReference type="ChEBI" id="CHEBI:58885"/>
    </ligand>
</feature>
<feature type="binding site" evidence="1">
    <location>
        <position position="377"/>
    </location>
    <ligand>
        <name>UDP-alpha-D-glucose</name>
        <dbReference type="ChEBI" id="CHEBI:58885"/>
    </ligand>
</feature>
<feature type="binding site" evidence="1">
    <location>
        <position position="378"/>
    </location>
    <ligand>
        <name>UDP-alpha-D-glucose</name>
        <dbReference type="ChEBI" id="CHEBI:58885"/>
    </ligand>
</feature>
<feature type="binding site" evidence="1">
    <location>
        <position position="381"/>
    </location>
    <ligand>
        <name>UDP-alpha-D-glucose</name>
        <dbReference type="ChEBI" id="CHEBI:58885"/>
    </ligand>
</feature>
<feature type="binding site" evidence="2">
    <location>
        <position position="396"/>
    </location>
    <ligand>
        <name>an anthocyanidin</name>
        <dbReference type="ChEBI" id="CHEBI:143576"/>
    </ligand>
</feature>
<feature type="binding site" evidence="1">
    <location>
        <position position="397"/>
    </location>
    <ligand>
        <name>UDP-alpha-D-glucose</name>
        <dbReference type="ChEBI" id="CHEBI:58885"/>
    </ligand>
</feature>
<feature type="binding site" evidence="1">
    <location>
        <position position="398"/>
    </location>
    <ligand>
        <name>UDP-alpha-D-glucose</name>
        <dbReference type="ChEBI" id="CHEBI:58885"/>
    </ligand>
</feature>
<gene>
    <name evidence="4" type="primary">UGT73C10</name>
</gene>
<accession>K4GKX2</accession>
<keyword id="KW-0328">Glycosyltransferase</keyword>
<keyword id="KW-0808">Transferase</keyword>
<name>73C10_BARVU</name>
<dbReference type="EC" id="2.4.1.368" evidence="3"/>
<dbReference type="EMBL" id="JQ291613">
    <property type="protein sequence ID" value="AFN26666.1"/>
    <property type="molecule type" value="Genomic_DNA"/>
</dbReference>
<dbReference type="SMR" id="K4GKX2"/>
<dbReference type="KEGG" id="ag:AFN26666"/>
<dbReference type="BRENDA" id="2.4.1.368">
    <property type="organism ID" value="16171"/>
</dbReference>
<dbReference type="GO" id="GO:0035251">
    <property type="term" value="F:UDP-glucosyltransferase activity"/>
    <property type="evidence" value="ECO:0000314"/>
    <property type="project" value="UniProtKB"/>
</dbReference>
<dbReference type="GO" id="GO:0016134">
    <property type="term" value="P:saponin metabolic process"/>
    <property type="evidence" value="ECO:0000314"/>
    <property type="project" value="UniProtKB"/>
</dbReference>
<dbReference type="CDD" id="cd03784">
    <property type="entry name" value="GT1_Gtf-like"/>
    <property type="match status" value="1"/>
</dbReference>
<dbReference type="FunFam" id="3.40.50.2000:FF:000047">
    <property type="entry name" value="Glycosyltransferase"/>
    <property type="match status" value="1"/>
</dbReference>
<dbReference type="FunFam" id="3.40.50.2000:FF:000071">
    <property type="entry name" value="Glycosyltransferase"/>
    <property type="match status" value="1"/>
</dbReference>
<dbReference type="Gene3D" id="3.40.50.2000">
    <property type="entry name" value="Glycogen Phosphorylase B"/>
    <property type="match status" value="2"/>
</dbReference>
<dbReference type="InterPro" id="IPR002213">
    <property type="entry name" value="UDP_glucos_trans"/>
</dbReference>
<dbReference type="InterPro" id="IPR035595">
    <property type="entry name" value="UDP_glycos_trans_CS"/>
</dbReference>
<dbReference type="PANTHER" id="PTHR48047">
    <property type="entry name" value="GLYCOSYLTRANSFERASE"/>
    <property type="match status" value="1"/>
</dbReference>
<dbReference type="PANTHER" id="PTHR48047:SF153">
    <property type="entry name" value="UDP-GLYCOSYLTRANSFERASE 73C5-RELATED"/>
    <property type="match status" value="1"/>
</dbReference>
<dbReference type="Pfam" id="PF00201">
    <property type="entry name" value="UDPGT"/>
    <property type="match status" value="1"/>
</dbReference>
<dbReference type="SUPFAM" id="SSF53756">
    <property type="entry name" value="UDP-Glycosyltransferase/glycogen phosphorylase"/>
    <property type="match status" value="1"/>
</dbReference>
<dbReference type="PROSITE" id="PS00375">
    <property type="entry name" value="UDPGT"/>
    <property type="match status" value="1"/>
</dbReference>
<evidence type="ECO:0000250" key="1">
    <source>
        <dbReference type="UniProtKB" id="A0A0A1HA03"/>
    </source>
</evidence>
<evidence type="ECO:0000250" key="2">
    <source>
        <dbReference type="UniProtKB" id="P51094"/>
    </source>
</evidence>
<evidence type="ECO:0000269" key="3">
    <source>
    </source>
</evidence>
<evidence type="ECO:0000303" key="4">
    <source>
    </source>
</evidence>
<evidence type="ECO:0000305" key="5"/>
<reference key="1">
    <citation type="journal article" date="2012" name="Plant Physiol.">
        <title>UDP-glycosyltransferases from the UGT73C subfamily in Barbarea vulgaris catalyze sapogenin 3-O-glucosylation in saponin-mediated insect resistance.</title>
        <authorList>
            <person name="Augustin J.M."/>
            <person name="Drok S."/>
            <person name="Shinoda T."/>
            <person name="Sanmiya K."/>
            <person name="Nielsen J.K."/>
            <person name="Khakimov B."/>
            <person name="Olsen C.E."/>
            <person name="Hansen E.H."/>
            <person name="Kuzina V."/>
            <person name="Ekstrom C.T."/>
            <person name="Hauser T."/>
            <person name="Bak S."/>
        </authorList>
    </citation>
    <scope>NUCLEOTIDE SEQUENCE [GENOMIC DNA]</scope>
    <scope>FUNCTION</scope>
    <scope>CATALYTIC ACTIVITY</scope>
</reference>